<reference key="1">
    <citation type="journal article" date="2006" name="Proc. Natl. Acad. Sci. U.S.A.">
        <title>The complete genome sequence of Lactobacillus bulgaricus reveals extensive and ongoing reductive evolution.</title>
        <authorList>
            <person name="van de Guchte M."/>
            <person name="Penaud S."/>
            <person name="Grimaldi C."/>
            <person name="Barbe V."/>
            <person name="Bryson K."/>
            <person name="Nicolas P."/>
            <person name="Robert C."/>
            <person name="Oztas S."/>
            <person name="Mangenot S."/>
            <person name="Couloux A."/>
            <person name="Loux V."/>
            <person name="Dervyn R."/>
            <person name="Bossy R."/>
            <person name="Bolotin A."/>
            <person name="Batto J.-M."/>
            <person name="Walunas T."/>
            <person name="Gibrat J.-F."/>
            <person name="Bessieres P."/>
            <person name="Weissenbach J."/>
            <person name="Ehrlich S.D."/>
            <person name="Maguin E."/>
        </authorList>
    </citation>
    <scope>NUCLEOTIDE SEQUENCE [LARGE SCALE GENOMIC DNA]</scope>
    <source>
        <strain>ATCC 11842 / DSM 20081 / BCRC 10696 / JCM 1002 / NBRC 13953 / NCIMB 11778 / NCTC 12712 / WDCM 00102 / Lb 14</strain>
    </source>
</reference>
<organism>
    <name type="scientific">Lactobacillus delbrueckii subsp. bulgaricus (strain ATCC 11842 / DSM 20081 / BCRC 10696 / JCM 1002 / NBRC 13953 / NCIMB 11778 / NCTC 12712 / WDCM 00102 / Lb 14)</name>
    <dbReference type="NCBI Taxonomy" id="390333"/>
    <lineage>
        <taxon>Bacteria</taxon>
        <taxon>Bacillati</taxon>
        <taxon>Bacillota</taxon>
        <taxon>Bacilli</taxon>
        <taxon>Lactobacillales</taxon>
        <taxon>Lactobacillaceae</taxon>
        <taxon>Lactobacillus</taxon>
    </lineage>
</organism>
<gene>
    <name evidence="1" type="primary">rpsS</name>
    <name type="ordered locus">Ldb0400</name>
</gene>
<proteinExistence type="inferred from homology"/>
<dbReference type="EMBL" id="CR954253">
    <property type="protein sequence ID" value="CAI97235.1"/>
    <property type="molecule type" value="Genomic_DNA"/>
</dbReference>
<dbReference type="RefSeq" id="WP_003620834.1">
    <property type="nucleotide sequence ID" value="NZ_JQAV01000001.1"/>
</dbReference>
<dbReference type="SMR" id="Q1GBL4"/>
<dbReference type="STRING" id="390333.Ldb0400"/>
<dbReference type="KEGG" id="ldb:Ldb0400"/>
<dbReference type="PATRIC" id="fig|390333.13.peg.390"/>
<dbReference type="eggNOG" id="COG0185">
    <property type="taxonomic scope" value="Bacteria"/>
</dbReference>
<dbReference type="HOGENOM" id="CLU_144911_0_1_9"/>
<dbReference type="BioCyc" id="LDEL390333:LDB_RS01695-MONOMER"/>
<dbReference type="Proteomes" id="UP000001259">
    <property type="component" value="Chromosome"/>
</dbReference>
<dbReference type="GO" id="GO:0005737">
    <property type="term" value="C:cytoplasm"/>
    <property type="evidence" value="ECO:0007669"/>
    <property type="project" value="UniProtKB-ARBA"/>
</dbReference>
<dbReference type="GO" id="GO:0015935">
    <property type="term" value="C:small ribosomal subunit"/>
    <property type="evidence" value="ECO:0007669"/>
    <property type="project" value="InterPro"/>
</dbReference>
<dbReference type="GO" id="GO:0019843">
    <property type="term" value="F:rRNA binding"/>
    <property type="evidence" value="ECO:0007669"/>
    <property type="project" value="UniProtKB-UniRule"/>
</dbReference>
<dbReference type="GO" id="GO:0003735">
    <property type="term" value="F:structural constituent of ribosome"/>
    <property type="evidence" value="ECO:0007669"/>
    <property type="project" value="InterPro"/>
</dbReference>
<dbReference type="GO" id="GO:0000028">
    <property type="term" value="P:ribosomal small subunit assembly"/>
    <property type="evidence" value="ECO:0007669"/>
    <property type="project" value="TreeGrafter"/>
</dbReference>
<dbReference type="GO" id="GO:0006412">
    <property type="term" value="P:translation"/>
    <property type="evidence" value="ECO:0007669"/>
    <property type="project" value="UniProtKB-UniRule"/>
</dbReference>
<dbReference type="FunFam" id="3.30.860.10:FF:000001">
    <property type="entry name" value="30S ribosomal protein S19"/>
    <property type="match status" value="1"/>
</dbReference>
<dbReference type="Gene3D" id="3.30.860.10">
    <property type="entry name" value="30s Ribosomal Protein S19, Chain A"/>
    <property type="match status" value="1"/>
</dbReference>
<dbReference type="HAMAP" id="MF_00531">
    <property type="entry name" value="Ribosomal_uS19"/>
    <property type="match status" value="1"/>
</dbReference>
<dbReference type="InterPro" id="IPR002222">
    <property type="entry name" value="Ribosomal_uS19"/>
</dbReference>
<dbReference type="InterPro" id="IPR005732">
    <property type="entry name" value="Ribosomal_uS19_bac-type"/>
</dbReference>
<dbReference type="InterPro" id="IPR020934">
    <property type="entry name" value="Ribosomal_uS19_CS"/>
</dbReference>
<dbReference type="InterPro" id="IPR023575">
    <property type="entry name" value="Ribosomal_uS19_SF"/>
</dbReference>
<dbReference type="NCBIfam" id="TIGR01050">
    <property type="entry name" value="rpsS_bact"/>
    <property type="match status" value="1"/>
</dbReference>
<dbReference type="PANTHER" id="PTHR11880">
    <property type="entry name" value="RIBOSOMAL PROTEIN S19P FAMILY MEMBER"/>
    <property type="match status" value="1"/>
</dbReference>
<dbReference type="PANTHER" id="PTHR11880:SF8">
    <property type="entry name" value="SMALL RIBOSOMAL SUBUNIT PROTEIN US19M"/>
    <property type="match status" value="1"/>
</dbReference>
<dbReference type="Pfam" id="PF00203">
    <property type="entry name" value="Ribosomal_S19"/>
    <property type="match status" value="1"/>
</dbReference>
<dbReference type="PIRSF" id="PIRSF002144">
    <property type="entry name" value="Ribosomal_S19"/>
    <property type="match status" value="1"/>
</dbReference>
<dbReference type="PRINTS" id="PR00975">
    <property type="entry name" value="RIBOSOMALS19"/>
</dbReference>
<dbReference type="SUPFAM" id="SSF54570">
    <property type="entry name" value="Ribosomal protein S19"/>
    <property type="match status" value="1"/>
</dbReference>
<dbReference type="PROSITE" id="PS00323">
    <property type="entry name" value="RIBOSOMAL_S19"/>
    <property type="match status" value="1"/>
</dbReference>
<evidence type="ECO:0000255" key="1">
    <source>
        <dbReference type="HAMAP-Rule" id="MF_00531"/>
    </source>
</evidence>
<evidence type="ECO:0000305" key="2"/>
<keyword id="KW-1185">Reference proteome</keyword>
<keyword id="KW-0687">Ribonucleoprotein</keyword>
<keyword id="KW-0689">Ribosomal protein</keyword>
<keyword id="KW-0694">RNA-binding</keyword>
<keyword id="KW-0699">rRNA-binding</keyword>
<comment type="function">
    <text evidence="1">Protein S19 forms a complex with S13 that binds strongly to the 16S ribosomal RNA.</text>
</comment>
<comment type="similarity">
    <text evidence="1">Belongs to the universal ribosomal protein uS19 family.</text>
</comment>
<protein>
    <recommendedName>
        <fullName evidence="1">Small ribosomal subunit protein uS19</fullName>
    </recommendedName>
    <alternativeName>
        <fullName evidence="2">30S ribosomal protein S19</fullName>
    </alternativeName>
</protein>
<feature type="chain" id="PRO_0000265374" description="Small ribosomal subunit protein uS19">
    <location>
        <begin position="1"/>
        <end position="91"/>
    </location>
</feature>
<accession>Q1GBL4</accession>
<name>RS19_LACDA</name>
<sequence>MSRSIKKGPFADAHLLKKVDEQQAAEKKQVIKTWSRRSTIFPSFVGLTIAVYDGRKHVPVFVTEDMVGHKLGEFVPTRTFRGHKADDKASK</sequence>